<name>INP52_YEAST</name>
<reference key="1">
    <citation type="journal article" date="1997" name="Nature">
        <title>The nucleotide sequence of Saccharomyces cerevisiae chromosome XIV and its evolutionary implications.</title>
        <authorList>
            <person name="Philippsen P."/>
            <person name="Kleine K."/>
            <person name="Poehlmann R."/>
            <person name="Duesterhoeft A."/>
            <person name="Hamberg K."/>
            <person name="Hegemann J.H."/>
            <person name="Obermaier B."/>
            <person name="Urrestarazu L.A."/>
            <person name="Aert R."/>
            <person name="Albermann K."/>
            <person name="Altmann R."/>
            <person name="Andre B."/>
            <person name="Baladron V."/>
            <person name="Ballesta J.P.G."/>
            <person name="Becam A.-M."/>
            <person name="Beinhauer J.D."/>
            <person name="Boskovic J."/>
            <person name="Buitrago M.J."/>
            <person name="Bussereau F."/>
            <person name="Coster F."/>
            <person name="Crouzet M."/>
            <person name="D'Angelo M."/>
            <person name="Dal Pero F."/>
            <person name="De Antoni A."/>
            <person name="del Rey F."/>
            <person name="Doignon F."/>
            <person name="Domdey H."/>
            <person name="Dubois E."/>
            <person name="Fiedler T.A."/>
            <person name="Fleig U."/>
            <person name="Floeth M."/>
            <person name="Fritz C."/>
            <person name="Gaillardin C."/>
            <person name="Garcia-Cantalejo J.M."/>
            <person name="Glansdorff N."/>
            <person name="Goffeau A."/>
            <person name="Gueldener U."/>
            <person name="Herbert C.J."/>
            <person name="Heumann K."/>
            <person name="Heuss-Neitzel D."/>
            <person name="Hilbert H."/>
            <person name="Hinni K."/>
            <person name="Iraqui Houssaini I."/>
            <person name="Jacquet M."/>
            <person name="Jimenez A."/>
            <person name="Jonniaux J.-L."/>
            <person name="Karpfinger-Hartl L."/>
            <person name="Lanfranchi G."/>
            <person name="Lepingle A."/>
            <person name="Levesque H."/>
            <person name="Lyck R."/>
            <person name="Maftahi M."/>
            <person name="Mallet L."/>
            <person name="Maurer C.T.C."/>
            <person name="Messenguy F."/>
            <person name="Mewes H.-W."/>
            <person name="Moestl D."/>
            <person name="Nasr F."/>
            <person name="Nicaud J.-M."/>
            <person name="Niedenthal R.K."/>
            <person name="Pandolfo D."/>
            <person name="Pierard A."/>
            <person name="Piravandi E."/>
            <person name="Planta R.J."/>
            <person name="Pohl T.M."/>
            <person name="Purnelle B."/>
            <person name="Rebischung C."/>
            <person name="Remacha M.A."/>
            <person name="Revuelta J.L."/>
            <person name="Rinke M."/>
            <person name="Saiz J.E."/>
            <person name="Sartorello F."/>
            <person name="Scherens B."/>
            <person name="Sen-Gupta M."/>
            <person name="Soler-Mira A."/>
            <person name="Urbanus J.H.M."/>
            <person name="Valle G."/>
            <person name="Van Dyck L."/>
            <person name="Verhasselt P."/>
            <person name="Vierendeels F."/>
            <person name="Vissers S."/>
            <person name="Voet M."/>
            <person name="Volckaert G."/>
            <person name="Wach A."/>
            <person name="Wambutt R."/>
            <person name="Wedler H."/>
            <person name="Zollner A."/>
            <person name="Hani J."/>
        </authorList>
    </citation>
    <scope>NUCLEOTIDE SEQUENCE [LARGE SCALE GENOMIC DNA]</scope>
    <source>
        <strain>ATCC 204508 / S288c</strain>
    </source>
</reference>
<reference key="2">
    <citation type="journal article" date="2014" name="G3 (Bethesda)">
        <title>The reference genome sequence of Saccharomyces cerevisiae: Then and now.</title>
        <authorList>
            <person name="Engel S.R."/>
            <person name="Dietrich F.S."/>
            <person name="Fisk D.G."/>
            <person name="Binkley G."/>
            <person name="Balakrishnan R."/>
            <person name="Costanzo M.C."/>
            <person name="Dwight S.S."/>
            <person name="Hitz B.C."/>
            <person name="Karra K."/>
            <person name="Nash R.S."/>
            <person name="Weng S."/>
            <person name="Wong E.D."/>
            <person name="Lloyd P."/>
            <person name="Skrzypek M.S."/>
            <person name="Miyasato S.R."/>
            <person name="Simison M."/>
            <person name="Cherry J.M."/>
        </authorList>
    </citation>
    <scope>GENOME REANNOTATION</scope>
    <source>
        <strain>ATCC 204508 / S288c</strain>
    </source>
</reference>
<reference key="3">
    <citation type="journal article" date="1996" name="Yeast">
        <title>The sequence of a 21.3 kb DNA fragment from the left arm of yeast chromosome XIV reveals LEU4, MET4, POL1, RAS2, and six new open reading frames.</title>
        <authorList>
            <person name="Saiz J.E."/>
            <person name="Buitrago M.J."/>
            <person name="Soler A."/>
            <person name="del Rey F."/>
            <person name="Revuelta J.L."/>
        </authorList>
    </citation>
    <scope>NUCLEOTIDE SEQUENCE [GENOMIC DNA] OF 1-1102</scope>
    <source>
        <strain>ATCC 96604 / S288c / FY1679</strain>
    </source>
</reference>
<reference key="4">
    <citation type="journal article" date="1997" name="Yeast">
        <title>The DNA sequence of cosmid 14-13b from chromosome XIV of Saccharomyces cerevisiae reveals an unusually high number of overlapping open reading frames.</title>
        <authorList>
            <person name="de Antoni A."/>
            <person name="D'Angelo M."/>
            <person name="Dal Pero F."/>
            <person name="Sartorello F."/>
            <person name="Pandolfo D."/>
            <person name="Pallavicini A."/>
            <person name="Lanfranchi G."/>
            <person name="Valle G."/>
        </authorList>
    </citation>
    <scope>NUCLEOTIDE SEQUENCE [GENOMIC DNA] OF 880-1183</scope>
</reference>
<reference key="5">
    <citation type="journal article" date="1997" name="J. Cell Biol.">
        <title>Novel genes involved in endosomal traffic in yeast revealed by suppression of a targeting-defective plasma membrane ATPase mutant.</title>
        <authorList>
            <person name="Luo W.-J."/>
            <person name="Chang A."/>
        </authorList>
    </citation>
    <scope>FUNCTION</scope>
</reference>
<reference key="6">
    <citation type="journal article" date="1998" name="Genetics">
        <title>Identification and characterization of an essential family of inositol polyphosphate 5-phosphatases (INP51, INP52 and INP53 gene products) in the yeast Saccharomyces cerevisiae.</title>
        <authorList>
            <person name="Stolz L.E."/>
            <person name="Huynh C.V."/>
            <person name="Thorner J."/>
            <person name="York J.D."/>
        </authorList>
    </citation>
    <scope>FUNCTION</scope>
</reference>
<reference key="7">
    <citation type="journal article" date="1998" name="J. Cell Sci.">
        <title>Synaptojanin family members are implicated in endocytic membrane traffic in yeast.</title>
        <authorList>
            <person name="Singer-Krueger B."/>
            <person name="Nemoto Y."/>
            <person name="Daniell L."/>
            <person name="Ferro-Novick S."/>
            <person name="De Camilli P."/>
        </authorList>
    </citation>
    <scope>FUNCTION</scope>
</reference>
<reference key="8">
    <citation type="journal article" date="1999" name="J. Biol. Chem.">
        <title>SAC1-like domains of yeast SAC1, INP52, and INP53 and of human synaptojanin encode polyphosphoinositide phosphatases.</title>
        <authorList>
            <person name="Guo S."/>
            <person name="Stolz L.E."/>
            <person name="Lemrow S.M."/>
            <person name="York J.D."/>
        </authorList>
    </citation>
    <scope>FUNCTION</scope>
    <scope>CATALYTIC ACTIVITY</scope>
    <scope>DOMAIN</scope>
</reference>
<reference key="9">
    <citation type="journal article" date="2000" name="J. Biol. Chem.">
        <title>SAC1 encodes a regulated lipid phosphoinositide phosphatase, defects in which can be suppressed by the homologous Inp52p and Inp53p phosphatases.</title>
        <authorList>
            <person name="Hughes W.E."/>
            <person name="Woscholski R."/>
            <person name="Cooke F.T."/>
            <person name="Patrick R.S."/>
            <person name="Dove S.K."/>
            <person name="McDonald N.Q."/>
            <person name="Parker P.J."/>
        </authorList>
    </citation>
    <scope>FUNCTION</scope>
</reference>
<reference key="10">
    <citation type="journal article" date="2000" name="J. Biol. Chem.">
        <title>The inositol polyphosphate 5-phosphatases and the apurinic/apyrimidinic base excision repair endonucleases share a common mechanism for catalysis.</title>
        <authorList>
            <person name="Whisstock J.C."/>
            <person name="Romero S."/>
            <person name="Gurung R."/>
            <person name="Nandurkar H."/>
            <person name="Ooms L.M."/>
            <person name="Bottomley S.P."/>
            <person name="Mitchell C.A."/>
        </authorList>
    </citation>
    <scope>FUNCTION</scope>
    <scope>MUTAGENESIS OF GLU-631; HIS-730 AND ASP-771</scope>
</reference>
<reference key="11">
    <citation type="journal article" date="2000" name="Mol. Cell. Biol.">
        <title>The yeast inositol polyphosphate 5-phosphatases inp52p and inp53p translocate to actin patches following hyperosmotic stress: mechanism for regulating phosphatidylinositol 4,5-bisphosphate at plasma membrane invaginations.</title>
        <authorList>
            <person name="Ooms L.M."/>
            <person name="McColl B.K."/>
            <person name="Wiradjaja F."/>
            <person name="Wijayaratnam A.P.W."/>
            <person name="Gleeson P."/>
            <person name="Gething M.J."/>
            <person name="Sambrook J.F."/>
            <person name="Mitchell C.A."/>
        </authorList>
    </citation>
    <scope>FUNCTION</scope>
    <scope>SUBCELLULAR LOCATION</scope>
</reference>
<reference key="12">
    <citation type="journal article" date="2001" name="Biochem. J.">
        <title>Mammalian inositol polyphosphate 5-phosphatase II can compensate for the absence of all three yeast Sac1-like-domain-containing 5-phosphatases.</title>
        <authorList>
            <person name="O'Malley C.J."/>
            <person name="McColl B.K."/>
            <person name="Kong A.M."/>
            <person name="Ellis S.L."/>
            <person name="Wijayaratnam A.P.W."/>
            <person name="Sambrook J."/>
            <person name="Mitchell C.A."/>
        </authorList>
    </citation>
    <scope>FUNCTION</scope>
</reference>
<reference key="13">
    <citation type="journal article" date="2003" name="FEBS Lett.">
        <title>Bsp1p/Ypr171p is an adapter that directly links some synaptojanin family members to the cortical actin cytoskeleton in yeast.</title>
        <authorList>
            <person name="Wicky S."/>
            <person name="Frischmuth S."/>
            <person name="Singer-Krueger B."/>
        </authorList>
    </citation>
    <scope>INTERACTION WITH BSP1</scope>
</reference>
<reference key="14">
    <citation type="journal article" date="2003" name="Nature">
        <title>Global analysis of protein localization in budding yeast.</title>
        <authorList>
            <person name="Huh W.-K."/>
            <person name="Falvo J.V."/>
            <person name="Gerke L.C."/>
            <person name="Carroll A.S."/>
            <person name="Howson R.W."/>
            <person name="Weissman J.S."/>
            <person name="O'Shea E.K."/>
        </authorList>
    </citation>
    <scope>SUBCELLULAR LOCATION [LARGE SCALE ANALYSIS]</scope>
</reference>
<reference key="15">
    <citation type="journal article" date="2004" name="Mol. Biol. Cell">
        <title>Essential role for the myotubularin-related phosphatase Ymr1p and the synaptojanin-like phosphatases Sjl2p and Sjl3p in regulation of phosphatidylinositol 3-phosphate in yeast.</title>
        <authorList>
            <person name="Parrish W.R."/>
            <person name="Stefan C.J."/>
            <person name="Emr S.D."/>
        </authorList>
    </citation>
    <scope>FUNCTION</scope>
</reference>
<reference key="16">
    <citation type="journal article" date="2005" name="FEMS Yeast Res.">
        <title>Interaction of Pik1p and Sjl proteins in membrane trafficking.</title>
        <authorList>
            <person name="Nguyen P.H."/>
            <person name="Hasek J."/>
            <person name="Kohlwein S.D."/>
            <person name="Romero C."/>
            <person name="Choi J.H."/>
            <person name="Vancura A."/>
        </authorList>
    </citation>
    <scope>FUNCTION</scope>
</reference>
<reference key="17">
    <citation type="journal article" date="2005" name="Mol. Cell. Biol.">
        <title>The phosphoinositide phosphatase Sjl2 is recruited to cortical actin patches in the control of vesicle formation and fission during endocytosis.</title>
        <authorList>
            <person name="Stefan C.J."/>
            <person name="Padilla S.M."/>
            <person name="Audhya A."/>
            <person name="Emr S.D."/>
        </authorList>
    </citation>
    <scope>FUNCTION</scope>
    <scope>SUBCELLULAR LOCATION</scope>
    <scope>INTERACTION WITH ABP1</scope>
</reference>
<reference key="18">
    <citation type="journal article" date="2005" name="Mol. Cell. Proteomics">
        <title>Quantitative phosphoproteomics applied to the yeast pheromone signaling pathway.</title>
        <authorList>
            <person name="Gruhler A."/>
            <person name="Olsen J.V."/>
            <person name="Mohammed S."/>
            <person name="Mortensen P."/>
            <person name="Faergeman N.J."/>
            <person name="Mann M."/>
            <person name="Jensen O.N."/>
        </authorList>
    </citation>
    <scope>PHOSPHORYLATION [LARGE SCALE ANALYSIS] AT SER-1005</scope>
    <scope>IDENTIFICATION BY MASS SPECTROMETRY [LARGE SCALE ANALYSIS]</scope>
    <source>
        <strain>YAL6B</strain>
    </source>
</reference>
<reference key="19">
    <citation type="journal article" date="2006" name="FEBS Lett.">
        <title>Sjl2p is specifically involved in early steps of endocytosis intimately linked to actin dynamics via the Ark1p/Prk1p kinases.</title>
        <authorList>
            <person name="Boettcher C."/>
            <person name="Wicky S."/>
            <person name="Schwarz H."/>
            <person name="Singer-Krueger B."/>
        </authorList>
    </citation>
    <scope>FUNCTION</scope>
    <scope>SUBCELLULAR LOCATION</scope>
</reference>
<reference key="20">
    <citation type="journal article" date="2007" name="J. Cell Biol.">
        <title>PtdIns(4,5)P2 turnover is required for multiple stages during clathrin- and actin-dependent endocytic internalization.</title>
        <authorList>
            <person name="Sun Y."/>
            <person name="Carroll S."/>
            <person name="Kaksonen M."/>
            <person name="Toshima J.Y."/>
            <person name="Drubin D.G."/>
        </authorList>
    </citation>
    <scope>FUNCTION</scope>
</reference>
<reference key="21">
    <citation type="journal article" date="2007" name="J. Proteome Res.">
        <title>Large-scale phosphorylation analysis of alpha-factor-arrested Saccharomyces cerevisiae.</title>
        <authorList>
            <person name="Li X."/>
            <person name="Gerber S.A."/>
            <person name="Rudner A.D."/>
            <person name="Beausoleil S.A."/>
            <person name="Haas W."/>
            <person name="Villen J."/>
            <person name="Elias J.E."/>
            <person name="Gygi S.P."/>
        </authorList>
    </citation>
    <scope>PHOSPHORYLATION [LARGE SCALE ANALYSIS] AT THR-1032</scope>
    <scope>IDENTIFICATION BY MASS SPECTROMETRY [LARGE SCALE ANALYSIS]</scope>
    <source>
        <strain>ADR376</strain>
    </source>
</reference>
<reference key="22">
    <citation type="journal article" date="2008" name="Mol. Cell. Proteomics">
        <title>A multidimensional chromatography technology for in-depth phosphoproteome analysis.</title>
        <authorList>
            <person name="Albuquerque C.P."/>
            <person name="Smolka M.B."/>
            <person name="Payne S.H."/>
            <person name="Bafna V."/>
            <person name="Eng J."/>
            <person name="Zhou H."/>
        </authorList>
    </citation>
    <scope>PHOSPHORYLATION [LARGE SCALE ANALYSIS] AT SER-152</scope>
    <scope>IDENTIFICATION BY MASS SPECTROMETRY [LARGE SCALE ANALYSIS]</scope>
</reference>
<reference key="23">
    <citation type="journal article" date="2009" name="Science">
        <title>Global analysis of Cdk1 substrate phosphorylation sites provides insights into evolution.</title>
        <authorList>
            <person name="Holt L.J."/>
            <person name="Tuch B.B."/>
            <person name="Villen J."/>
            <person name="Johnson A.D."/>
            <person name="Gygi S.P."/>
            <person name="Morgan D.O."/>
        </authorList>
    </citation>
    <scope>PHOSPHORYLATION [LARGE SCALE ANALYSIS] AT SER-522; SER-1005 AND SER-1016</scope>
    <scope>IDENTIFICATION BY MASS SPECTROMETRY [LARGE SCALE ANALYSIS]</scope>
</reference>
<dbReference type="EC" id="3.1.3.-" evidence="4"/>
<dbReference type="EC" id="3.1.3.36" evidence="4"/>
<dbReference type="EMBL" id="Z71382">
    <property type="protein sequence ID" value="CAA95982.1"/>
    <property type="molecule type" value="Genomic_DNA"/>
</dbReference>
<dbReference type="EMBL" id="Z69382">
    <property type="protein sequence ID" value="CAA93402.1"/>
    <property type="molecule type" value="Genomic_DNA"/>
</dbReference>
<dbReference type="EMBL" id="Z50161">
    <property type="protein sequence ID" value="CAA90520.1"/>
    <property type="molecule type" value="Genomic_DNA"/>
</dbReference>
<dbReference type="EMBL" id="BK006947">
    <property type="protein sequence ID" value="DAA10440.1"/>
    <property type="molecule type" value="Genomic_DNA"/>
</dbReference>
<dbReference type="PIR" id="S63046">
    <property type="entry name" value="S63046"/>
</dbReference>
<dbReference type="RefSeq" id="NP_014293.1">
    <property type="nucleotide sequence ID" value="NM_001182944.1"/>
</dbReference>
<dbReference type="BMRB" id="P50942"/>
<dbReference type="SMR" id="P50942"/>
<dbReference type="BioGRID" id="35718">
    <property type="interactions" value="204"/>
</dbReference>
<dbReference type="DIP" id="DIP-2764N"/>
<dbReference type="FunCoup" id="P50942">
    <property type="interactions" value="379"/>
</dbReference>
<dbReference type="IntAct" id="P50942">
    <property type="interactions" value="27"/>
</dbReference>
<dbReference type="MINT" id="P50942"/>
<dbReference type="STRING" id="4932.YNL106C"/>
<dbReference type="iPTMnet" id="P50942"/>
<dbReference type="PaxDb" id="4932-YNL106C"/>
<dbReference type="PeptideAtlas" id="P50942"/>
<dbReference type="EnsemblFungi" id="YNL106C_mRNA">
    <property type="protein sequence ID" value="YNL106C"/>
    <property type="gene ID" value="YNL106C"/>
</dbReference>
<dbReference type="GeneID" id="855618"/>
<dbReference type="KEGG" id="sce:YNL106C"/>
<dbReference type="AGR" id="SGD:S000005050"/>
<dbReference type="SGD" id="S000005050">
    <property type="gene designation" value="INP52"/>
</dbReference>
<dbReference type="VEuPathDB" id="FungiDB:YNL106C"/>
<dbReference type="eggNOG" id="KOG0566">
    <property type="taxonomic scope" value="Eukaryota"/>
</dbReference>
<dbReference type="GeneTree" id="ENSGT00940000170400"/>
<dbReference type="HOGENOM" id="CLU_003016_2_0_1"/>
<dbReference type="InParanoid" id="P50942"/>
<dbReference type="OMA" id="HPCHELR"/>
<dbReference type="OrthoDB" id="405996at2759"/>
<dbReference type="BioCyc" id="YEAST:MONOMER3O-69"/>
<dbReference type="Reactome" id="R-SCE-1660499">
    <property type="pathway name" value="Synthesis of PIPs at the plasma membrane"/>
</dbReference>
<dbReference type="BioGRID-ORCS" id="855618">
    <property type="hits" value="0 hits in 10 CRISPR screens"/>
</dbReference>
<dbReference type="PRO" id="PR:P50942"/>
<dbReference type="Proteomes" id="UP000002311">
    <property type="component" value="Chromosome XIV"/>
</dbReference>
<dbReference type="RNAct" id="P50942">
    <property type="molecule type" value="protein"/>
</dbReference>
<dbReference type="GO" id="GO:0030479">
    <property type="term" value="C:actin cortical patch"/>
    <property type="evidence" value="ECO:0000314"/>
    <property type="project" value="SGD"/>
</dbReference>
<dbReference type="GO" id="GO:0005737">
    <property type="term" value="C:cytoplasm"/>
    <property type="evidence" value="ECO:0000314"/>
    <property type="project" value="SGD"/>
</dbReference>
<dbReference type="GO" id="GO:0043332">
    <property type="term" value="C:mating projection tip"/>
    <property type="evidence" value="ECO:0007005"/>
    <property type="project" value="SGD"/>
</dbReference>
<dbReference type="GO" id="GO:0016020">
    <property type="term" value="C:membrane"/>
    <property type="evidence" value="ECO:0000318"/>
    <property type="project" value="GO_Central"/>
</dbReference>
<dbReference type="GO" id="GO:0052658">
    <property type="term" value="F:inositol-1,4,5-trisphosphate 5-phosphatase activity"/>
    <property type="evidence" value="ECO:0000318"/>
    <property type="project" value="GO_Central"/>
</dbReference>
<dbReference type="GO" id="GO:0043813">
    <property type="term" value="F:phosphatidylinositol-3,5-bisphosphate 5-phosphatase activity"/>
    <property type="evidence" value="ECO:0000314"/>
    <property type="project" value="SGD"/>
</dbReference>
<dbReference type="GO" id="GO:0004438">
    <property type="term" value="F:phosphatidylinositol-3-phosphate phosphatase activity"/>
    <property type="evidence" value="ECO:0000314"/>
    <property type="project" value="SGD"/>
</dbReference>
<dbReference type="GO" id="GO:0004439">
    <property type="term" value="F:phosphatidylinositol-4,5-bisphosphate 5-phosphatase activity"/>
    <property type="evidence" value="ECO:0000314"/>
    <property type="project" value="SGD"/>
</dbReference>
<dbReference type="GO" id="GO:0043812">
    <property type="term" value="F:phosphatidylinositol-4-phosphate phosphatase activity"/>
    <property type="evidence" value="ECO:0000314"/>
    <property type="project" value="SGD"/>
</dbReference>
<dbReference type="GO" id="GO:0006897">
    <property type="term" value="P:endocytosis"/>
    <property type="evidence" value="ECO:0007669"/>
    <property type="project" value="UniProtKB-KW"/>
</dbReference>
<dbReference type="GO" id="GO:0046856">
    <property type="term" value="P:phosphatidylinositol dephosphorylation"/>
    <property type="evidence" value="ECO:0000314"/>
    <property type="project" value="SGD"/>
</dbReference>
<dbReference type="GO" id="GO:0015031">
    <property type="term" value="P:protein transport"/>
    <property type="evidence" value="ECO:0007669"/>
    <property type="project" value="UniProtKB-KW"/>
</dbReference>
<dbReference type="CDD" id="cd09090">
    <property type="entry name" value="INPP5c_ScInp51p-like"/>
    <property type="match status" value="1"/>
</dbReference>
<dbReference type="FunFam" id="3.60.10.10:FF:000029">
    <property type="entry name" value="Inositol polyphosphate 5-phosphatase"/>
    <property type="match status" value="1"/>
</dbReference>
<dbReference type="Gene3D" id="3.60.10.10">
    <property type="entry name" value="Endonuclease/exonuclease/phosphatase"/>
    <property type="match status" value="1"/>
</dbReference>
<dbReference type="InterPro" id="IPR036691">
    <property type="entry name" value="Endo/exonu/phosph_ase_sf"/>
</dbReference>
<dbReference type="InterPro" id="IPR046985">
    <property type="entry name" value="IP5"/>
</dbReference>
<dbReference type="InterPro" id="IPR000300">
    <property type="entry name" value="IPPc"/>
</dbReference>
<dbReference type="InterPro" id="IPR002013">
    <property type="entry name" value="SAC_dom"/>
</dbReference>
<dbReference type="PANTHER" id="PTHR11200">
    <property type="entry name" value="INOSITOL 5-PHOSPHATASE"/>
    <property type="match status" value="1"/>
</dbReference>
<dbReference type="PANTHER" id="PTHR11200:SF257">
    <property type="entry name" value="PHOSPHOINOSITIDE 5-PHOSPHATASE"/>
    <property type="match status" value="1"/>
</dbReference>
<dbReference type="Pfam" id="PF22669">
    <property type="entry name" value="Exo_endo_phos2"/>
    <property type="match status" value="1"/>
</dbReference>
<dbReference type="Pfam" id="PF02383">
    <property type="entry name" value="Syja_N"/>
    <property type="match status" value="1"/>
</dbReference>
<dbReference type="SMART" id="SM00128">
    <property type="entry name" value="IPPc"/>
    <property type="match status" value="1"/>
</dbReference>
<dbReference type="SUPFAM" id="SSF56219">
    <property type="entry name" value="DNase I-like"/>
    <property type="match status" value="1"/>
</dbReference>
<dbReference type="PROSITE" id="PS50275">
    <property type="entry name" value="SAC"/>
    <property type="match status" value="1"/>
</dbReference>
<protein>
    <recommendedName>
        <fullName evidence="20">Polyphosphatidylinositol phosphatase INP52</fullName>
    </recommendedName>
    <alternativeName>
        <fullName evidence="21">Synaptojanin-like protein 2</fullName>
    </alternativeName>
    <domain>
        <recommendedName>
            <fullName evidence="19">SAC1-like phosphoinositide phosphatase</fullName>
            <ecNumber evidence="4">3.1.3.-</ecNumber>
        </recommendedName>
    </domain>
    <domain>
        <recommendedName>
            <fullName evidence="19">Phosphatidylinositol 4,5-bisphosphate 5-phosphatase</fullName>
            <ecNumber evidence="4">3.1.3.36</ecNumber>
        </recommendedName>
    </domain>
</protein>
<evidence type="ECO:0000250" key="1">
    <source>
        <dbReference type="UniProtKB" id="Q12271"/>
    </source>
</evidence>
<evidence type="ECO:0000255" key="2">
    <source>
        <dbReference type="PROSITE-ProRule" id="PRU00183"/>
    </source>
</evidence>
<evidence type="ECO:0000256" key="3">
    <source>
        <dbReference type="SAM" id="MobiDB-lite"/>
    </source>
</evidence>
<evidence type="ECO:0000269" key="4">
    <source>
    </source>
</evidence>
<evidence type="ECO:0000269" key="5">
    <source>
    </source>
</evidence>
<evidence type="ECO:0000269" key="6">
    <source>
    </source>
</evidence>
<evidence type="ECO:0000269" key="7">
    <source>
    </source>
</evidence>
<evidence type="ECO:0000269" key="8">
    <source>
    </source>
</evidence>
<evidence type="ECO:0000269" key="9">
    <source>
    </source>
</evidence>
<evidence type="ECO:0000269" key="10">
    <source>
    </source>
</evidence>
<evidence type="ECO:0000269" key="11">
    <source>
    </source>
</evidence>
<evidence type="ECO:0000269" key="12">
    <source>
    </source>
</evidence>
<evidence type="ECO:0000269" key="13">
    <source>
    </source>
</evidence>
<evidence type="ECO:0000269" key="14">
    <source>
    </source>
</evidence>
<evidence type="ECO:0000269" key="15">
    <source>
    </source>
</evidence>
<evidence type="ECO:0000269" key="16">
    <source>
    </source>
</evidence>
<evidence type="ECO:0000269" key="17">
    <source>
    </source>
</evidence>
<evidence type="ECO:0000269" key="18">
    <source>
    </source>
</evidence>
<evidence type="ECO:0000303" key="19">
    <source>
    </source>
</evidence>
<evidence type="ECO:0000303" key="20">
    <source>
    </source>
</evidence>
<evidence type="ECO:0000303" key="21">
    <source>
    </source>
</evidence>
<evidence type="ECO:0000305" key="22"/>
<evidence type="ECO:0007744" key="23">
    <source>
    </source>
</evidence>
<evidence type="ECO:0007744" key="24">
    <source>
    </source>
</evidence>
<evidence type="ECO:0007744" key="25">
    <source>
    </source>
</evidence>
<evidence type="ECO:0007744" key="26">
    <source>
    </source>
</evidence>
<organism>
    <name type="scientific">Saccharomyces cerevisiae (strain ATCC 204508 / S288c)</name>
    <name type="common">Baker's yeast</name>
    <dbReference type="NCBI Taxonomy" id="559292"/>
    <lineage>
        <taxon>Eukaryota</taxon>
        <taxon>Fungi</taxon>
        <taxon>Dikarya</taxon>
        <taxon>Ascomycota</taxon>
        <taxon>Saccharomycotina</taxon>
        <taxon>Saccharomycetes</taxon>
        <taxon>Saccharomycetales</taxon>
        <taxon>Saccharomycetaceae</taxon>
        <taxon>Saccharomyces</taxon>
    </lineage>
</organism>
<comment type="function">
    <text evidence="4 5 6 7 8 11 12 13 14 15 16 17 18">Dephosphorylates a number of phosphatidylinositols (PIs) like phosphatidylinositol 4,5-bisphosphate (PtdIns(4,5)P2), but also phosphatidylinositol 3-phosphate (PtdIns(3)P), phosphatidylinositol 4-phosphate (PtdIns(4)P), and phosphatidylinositol 3,5-bisphosphate (PtdIns(3,5)P2). Controls the cellular levels and subcellular distribution of phosphatidylinositol 3-phosphate and phosphatidylinositol 4,5-bisphosphate. Specifically functions within the early endocytic pathway and actin organization.</text>
</comment>
<comment type="catalytic activity">
    <reaction evidence="4">
        <text>a 1,2-diacyl-sn-glycero-3-phospho-(1D-myo-inositol-4,5-bisphosphate) + H2O = a 1,2-diacyl-sn-glycero-3-phospho-(1D-myo-inositol 4-phosphate) + phosphate</text>
        <dbReference type="Rhea" id="RHEA:22764"/>
        <dbReference type="ChEBI" id="CHEBI:15377"/>
        <dbReference type="ChEBI" id="CHEBI:43474"/>
        <dbReference type="ChEBI" id="CHEBI:58178"/>
        <dbReference type="ChEBI" id="CHEBI:58456"/>
        <dbReference type="EC" id="3.1.3.36"/>
    </reaction>
</comment>
<comment type="subunit">
    <text evidence="9 13">Interacts (via SAC domain) with BSP1; the interaction is direct (PubMed:12606027). Interacts with ABP1 (PubMed:15798181).</text>
</comment>
<comment type="interaction">
    <interactant intactId="EBI-28834">
        <id>P50942</id>
    </interactant>
    <interactant intactId="EBI-2036">
        <id>P15891</id>
        <label>ABP1</label>
    </interactant>
    <organismsDiffer>false</organismsDiffer>
    <experiments>3</experiments>
</comment>
<comment type="interaction">
    <interactant intactId="EBI-28834">
        <id>P50942</id>
    </interactant>
    <interactant intactId="EBI-37047">
        <id>Q06604</id>
        <label>BSP1</label>
    </interactant>
    <organismsDiffer>false</organismsDiffer>
    <experiments>4</experiments>
</comment>
<comment type="subcellular location">
    <subcellularLocation>
        <location evidence="7 10 13 14">Cytoplasm</location>
        <location evidence="7 10 13 14">Cytoskeleton</location>
        <location evidence="7 10 13 14">Actin patch</location>
    </subcellularLocation>
</comment>
<comment type="domain">
    <text evidence="4">The SAC domain is capable of hydrolyzing phosphatidylinositol 3-phosphate (PtdIns(3)P), phosphatidylinositol 4-phosphate (PtdIns(4)P), and phosphatidylinositol 3,5-bisphosphate (PtdIns(3,5)P2).</text>
</comment>
<comment type="similarity">
    <text evidence="22">Belongs to the synaptojanin family.</text>
</comment>
<comment type="similarity">
    <text evidence="22">In the central section; belongs to the inositol 1,4,5-trisphosphate 5-phosphatase family.</text>
</comment>
<sequence>MKILLSKQQTRKIAIVSETHGLVFRPINSKNSRRSTCAVELVPKAELNGNGFRRLSNHEIYGFIGLIEIEGLMFIATITGKSKVAQPIPNKTVNKIYAVDFFCLNNSKWDFMDIDSSGYPIVTNDGDFAISSPPSISTHSSRSSLRSSSSRSLNAQEQAPKHPCHELRKLLSNGSFYYSTDFDLTCTLQKRGFTEHSLSFDDFDREFMWNSFLMDEIITYRDRLDVTAKELLDQRGFLTTVIRGFAETIFSYINRLKVGLTIISRQSWKRAGTRFNARGIDDDGHVANFVETEMIMYSSQYCYAFTQIRGSLPIFWEQDTSLISPKIQITRSVEATQPTFDEHFIRLFKKYGPVHIINLLSTKSSEIQLSRRYKEQLKNSEKMKIGRDVFLTSFDFHRETSQDGFAAASRIIPKIRNTILDAGYFSYDVKEGRLISEQDGVFRTNCLDCLDRTNLIQQTISLAVFKLFLEDFRLVKPSSFIDDNEFVQKVNALWADNGDQISQIYTGTNALKSSYSRKGKMSFSGALSDATKSVSRMYINNFVDKGKQQNIDTLLGKLPHQQVVELYDPICEYVNERLLESEEKFTTHSNINLFVGTFNVNGNSRRADLSKWLFPIGDKFKPDVVVLGLQEVIELTAGSILNADYTKSSFWETMVTDCLNQYEEKYLLLRVEQMSSLLILFFARSDRAYNIKEVGGSTKKTGFGGITGNKGAVAIRFDYGATSFCFVNTHLSAGASNIDERRNDYNNIYRNITFPRSKTIPHHDSLFWLGDLNYRITLTNDEVRRELRAQKDGYIDRLLQYDQLTQEINEGVVFQGFKEPTLQFRPTYKYDYGTDNYDTSEKARTPSWTDRIIYKGENLHPLAYSDAPLKISDHKPVYAAYRANVKFVDEKEKLNLVEKLYAEYKNTHPEALTTGPDELSHARMEKQKESIPLDATVQSAGIKLIDLDDTSSCVSPLLSGPSPQPSVVGPGGLSNVSPDKSKLNVLPPPPPTSRHNKEPSSKLLSPTKEISIVSVSPRKGESNLPALERHSTPKPLPPVPALSLSKPVSLQKSSSELQHAKETIDNGKIVPRPCPPIRRKSSTAPDEISTSTKNSGVSTTEDPEPAKASTKPEKPPVVKKPHYLSVAANKLNTSQEHSIKVSPSNSKSEEELPCKKKSKPKVPAKNPELEKLSVHPLKPCDPN</sequence>
<accession>P50942</accession>
<accession>D6W174</accession>
<keyword id="KW-0963">Cytoplasm</keyword>
<keyword id="KW-0206">Cytoskeleton</keyword>
<keyword id="KW-0254">Endocytosis</keyword>
<keyword id="KW-0378">Hydrolase</keyword>
<keyword id="KW-0443">Lipid metabolism</keyword>
<keyword id="KW-0597">Phosphoprotein</keyword>
<keyword id="KW-0653">Protein transport</keyword>
<keyword id="KW-1185">Reference proteome</keyword>
<keyword id="KW-0813">Transport</keyword>
<gene>
    <name evidence="20" type="primary">INP52</name>
    <name evidence="21" type="synonym">SJL2</name>
    <name type="ordered locus">YNL106C</name>
    <name type="ORF">N2160</name>
</gene>
<feature type="chain" id="PRO_0000209745" description="Polyphosphatidylinositol phosphatase INP52">
    <location>
        <begin position="1"/>
        <end position="1183"/>
    </location>
</feature>
<feature type="domain" description="SAC" evidence="2">
    <location>
        <begin position="167"/>
        <end position="507"/>
    </location>
</feature>
<feature type="region of interest" description="Disordered" evidence="3">
    <location>
        <begin position="133"/>
        <end position="161"/>
    </location>
</feature>
<feature type="region of interest" description="Disordered" evidence="3">
    <location>
        <begin position="955"/>
        <end position="1183"/>
    </location>
</feature>
<feature type="compositionally biased region" description="Low complexity" evidence="3">
    <location>
        <begin position="133"/>
        <end position="153"/>
    </location>
</feature>
<feature type="compositionally biased region" description="Low complexity" evidence="3">
    <location>
        <begin position="955"/>
        <end position="968"/>
    </location>
</feature>
<feature type="compositionally biased region" description="Polar residues" evidence="3">
    <location>
        <begin position="1046"/>
        <end position="1057"/>
    </location>
</feature>
<feature type="compositionally biased region" description="Polar residues" evidence="3">
    <location>
        <begin position="1082"/>
        <end position="1100"/>
    </location>
</feature>
<feature type="compositionally biased region" description="Polar residues" evidence="3">
    <location>
        <begin position="1130"/>
        <end position="1145"/>
    </location>
</feature>
<feature type="modified residue" description="Phosphoserine" evidence="25">
    <location>
        <position position="152"/>
    </location>
</feature>
<feature type="modified residue" description="Phosphoserine" evidence="26">
    <location>
        <position position="522"/>
    </location>
</feature>
<feature type="modified residue" description="Phosphoserine" evidence="23 26">
    <location>
        <position position="1005"/>
    </location>
</feature>
<feature type="modified residue" description="Phosphoserine" evidence="26">
    <location>
        <position position="1016"/>
    </location>
</feature>
<feature type="modified residue" description="Phosphothreonine" evidence="24">
    <location>
        <position position="1032"/>
    </location>
</feature>
<feature type="modified residue" description="Phosphoserine" evidence="1">
    <location>
        <position position="1095"/>
    </location>
</feature>
<feature type="mutagenesis site" description="Impairs completely enzyme activity." evidence="6">
    <original>E</original>
    <variation>A</variation>
    <location>
        <position position="631"/>
    </location>
</feature>
<feature type="mutagenesis site" description="Impairs completely enzyme activity." evidence="6">
    <original>H</original>
    <variation>A</variation>
    <location>
        <position position="730"/>
    </location>
</feature>
<feature type="mutagenesis site" description="Impairs completely enzyme activity." evidence="6">
    <original>D</original>
    <variation>A</variation>
    <location>
        <position position="771"/>
    </location>
</feature>
<proteinExistence type="evidence at protein level"/>